<gene>
    <name type="primary">GK2</name>
    <name type="ORF">QtsA-10839</name>
</gene>
<evidence type="ECO:0000250" key="1"/>
<evidence type="ECO:0000250" key="2">
    <source>
        <dbReference type="UniProtKB" id="Q9WU65"/>
    </source>
</evidence>
<evidence type="ECO:0000255" key="3"/>
<evidence type="ECO:0000305" key="4"/>
<comment type="function">
    <text evidence="2">Key enzyme in the regulation of glycerol uptake and metabolism. Essential for male fertility and sperm mitochondrial sheath formation (By similarity). Required for proper arrangement of crescent-like mitochondria to form the mitochondrial sheath during spermatogenesis (By similarity). Can induce mitochondrial clustering through interactions with PLD6 and up-regulation of phosphatidic acid synthesis in the mitochondria (By similarity).</text>
</comment>
<comment type="catalytic activity">
    <reaction>
        <text>glycerol + ATP = sn-glycerol 3-phosphate + ADP + H(+)</text>
        <dbReference type="Rhea" id="RHEA:21644"/>
        <dbReference type="ChEBI" id="CHEBI:15378"/>
        <dbReference type="ChEBI" id="CHEBI:17754"/>
        <dbReference type="ChEBI" id="CHEBI:30616"/>
        <dbReference type="ChEBI" id="CHEBI:57597"/>
        <dbReference type="ChEBI" id="CHEBI:456216"/>
        <dbReference type="EC" id="2.7.1.30"/>
    </reaction>
</comment>
<comment type="pathway">
    <text>Polyol metabolism; glycerol degradation via glycerol kinase pathway; sn-glycerol 3-phosphate from glycerol: step 1/1.</text>
</comment>
<comment type="subunit">
    <text evidence="2">Interacts with ARMC12 and PLD6.</text>
</comment>
<comment type="subcellular location">
    <subcellularLocation>
        <location evidence="2">Mitochondrion outer membrane</location>
        <topology evidence="2">Single-pass type IV membrane protein</topology>
    </subcellularLocation>
    <subcellularLocation>
        <location evidence="1">Cytoplasm</location>
    </subcellularLocation>
    <text evidence="2">In sperm the majority of the enzyme is bound to mitochondria.</text>
</comment>
<comment type="similarity">
    <text evidence="4">Belongs to the FGGY kinase family.</text>
</comment>
<proteinExistence type="evidence at transcript level"/>
<feature type="chain" id="PRO_0000343677" description="Glycerol kinase 2">
    <location>
        <begin position="1"/>
        <end position="553"/>
    </location>
</feature>
<feature type="transmembrane region" description="Helical" evidence="3">
    <location>
        <begin position="526"/>
        <end position="546"/>
    </location>
</feature>
<feature type="binding site" evidence="1">
    <location>
        <position position="20"/>
    </location>
    <ligand>
        <name>substrate</name>
    </ligand>
</feature>
<feature type="binding site" evidence="1">
    <location>
        <position position="24"/>
    </location>
    <ligand>
        <name>ATP</name>
        <dbReference type="ChEBI" id="CHEBI:30616"/>
    </ligand>
</feature>
<feature type="binding site" evidence="1">
    <location>
        <position position="94"/>
    </location>
    <ligand>
        <name>substrate</name>
    </ligand>
</feature>
<feature type="binding site" evidence="1">
    <location>
        <position position="148"/>
    </location>
    <ligand>
        <name>substrate</name>
    </ligand>
</feature>
<feature type="binding site" evidence="1">
    <location>
        <position position="259"/>
    </location>
    <ligand>
        <name>substrate</name>
    </ligand>
</feature>
<feature type="binding site" evidence="1">
    <location>
        <position position="281"/>
    </location>
    <ligand>
        <name>ATP</name>
        <dbReference type="ChEBI" id="CHEBI:30616"/>
    </ligand>
</feature>
<feature type="binding site" evidence="1">
    <location>
        <position position="326"/>
    </location>
    <ligand>
        <name>ATP</name>
        <dbReference type="ChEBI" id="CHEBI:30616"/>
    </ligand>
</feature>
<feature type="binding site" evidence="1">
    <location>
        <begin position="427"/>
        <end position="431"/>
    </location>
    <ligand>
        <name>ATP</name>
        <dbReference type="ChEBI" id="CHEBI:30616"/>
    </ligand>
</feature>
<reference key="1">
    <citation type="submission" date="2005-06" db="EMBL/GenBank/DDBJ databases">
        <title>DNA sequences of macaque genes expressed in brain or testis and its evolutionary implications.</title>
        <authorList>
            <consortium name="International consortium for macaque cDNA sequencing and analysis"/>
        </authorList>
    </citation>
    <scope>NUCLEOTIDE SEQUENCE [LARGE SCALE MRNA]</scope>
    <source>
        <tissue>Testis</tissue>
    </source>
</reference>
<keyword id="KW-0067">ATP-binding</keyword>
<keyword id="KW-0963">Cytoplasm</keyword>
<keyword id="KW-0221">Differentiation</keyword>
<keyword id="KW-0319">Glycerol metabolism</keyword>
<keyword id="KW-0418">Kinase</keyword>
<keyword id="KW-0472">Membrane</keyword>
<keyword id="KW-0496">Mitochondrion</keyword>
<keyword id="KW-1000">Mitochondrion outer membrane</keyword>
<keyword id="KW-0547">Nucleotide-binding</keyword>
<keyword id="KW-1185">Reference proteome</keyword>
<keyword id="KW-0744">Spermatogenesis</keyword>
<keyword id="KW-0808">Transferase</keyword>
<keyword id="KW-0812">Transmembrane</keyword>
<keyword id="KW-1133">Transmembrane helix</keyword>
<protein>
    <recommendedName>
        <fullName>Glycerol kinase 2</fullName>
        <shortName>GK 2</shortName>
        <shortName>Glycerokinase 2</shortName>
        <ecNumber>2.7.1.30</ecNumber>
    </recommendedName>
    <alternativeName>
        <fullName>ATP:glycerol 3-phosphotransferase 2</fullName>
    </alternativeName>
    <alternativeName>
        <fullName>Glycerol kinase, testis specific 2</fullName>
    </alternativeName>
</protein>
<accession>Q4R4D5</accession>
<dbReference type="EC" id="2.7.1.30"/>
<dbReference type="EMBL" id="AB178979">
    <property type="protein sequence ID" value="BAE02030.1"/>
    <property type="molecule type" value="mRNA"/>
</dbReference>
<dbReference type="RefSeq" id="NP_001270487.1">
    <property type="nucleotide sequence ID" value="NM_001283558.1"/>
</dbReference>
<dbReference type="SMR" id="Q4R4D5"/>
<dbReference type="STRING" id="9541.ENSMFAP00000011130"/>
<dbReference type="eggNOG" id="KOG2517">
    <property type="taxonomic scope" value="Eukaryota"/>
</dbReference>
<dbReference type="UniPathway" id="UPA00618">
    <property type="reaction ID" value="UER00672"/>
</dbReference>
<dbReference type="Proteomes" id="UP000233100">
    <property type="component" value="Unplaced"/>
</dbReference>
<dbReference type="GO" id="GO:0005741">
    <property type="term" value="C:mitochondrial outer membrane"/>
    <property type="evidence" value="ECO:0000250"/>
    <property type="project" value="UniProtKB"/>
</dbReference>
<dbReference type="GO" id="GO:0097225">
    <property type="term" value="C:sperm midpiece"/>
    <property type="evidence" value="ECO:0000250"/>
    <property type="project" value="UniProtKB"/>
</dbReference>
<dbReference type="GO" id="GO:0097226">
    <property type="term" value="C:sperm mitochondrial sheath"/>
    <property type="evidence" value="ECO:0000250"/>
    <property type="project" value="UniProtKB"/>
</dbReference>
<dbReference type="GO" id="GO:0005524">
    <property type="term" value="F:ATP binding"/>
    <property type="evidence" value="ECO:0007669"/>
    <property type="project" value="UniProtKB-KW"/>
</dbReference>
<dbReference type="GO" id="GO:0004370">
    <property type="term" value="F:glycerol kinase activity"/>
    <property type="evidence" value="ECO:0007669"/>
    <property type="project" value="UniProtKB-EC"/>
</dbReference>
<dbReference type="GO" id="GO:0030317">
    <property type="term" value="P:flagellated sperm motility"/>
    <property type="evidence" value="ECO:0000250"/>
    <property type="project" value="UniProtKB"/>
</dbReference>
<dbReference type="GO" id="GO:0019563">
    <property type="term" value="P:glycerol catabolic process"/>
    <property type="evidence" value="ECO:0007669"/>
    <property type="project" value="UniProtKB-UniPathway"/>
</dbReference>
<dbReference type="GO" id="GO:0046167">
    <property type="term" value="P:glycerol-3-phosphate biosynthetic process"/>
    <property type="evidence" value="ECO:0007669"/>
    <property type="project" value="TreeGrafter"/>
</dbReference>
<dbReference type="GO" id="GO:0120317">
    <property type="term" value="P:sperm mitochondrial sheath assembly"/>
    <property type="evidence" value="ECO:0000250"/>
    <property type="project" value="UniProtKB"/>
</dbReference>
<dbReference type="GO" id="GO:0007283">
    <property type="term" value="P:spermatogenesis"/>
    <property type="evidence" value="ECO:0000250"/>
    <property type="project" value="UniProtKB"/>
</dbReference>
<dbReference type="GO" id="GO:0006641">
    <property type="term" value="P:triglyceride metabolic process"/>
    <property type="evidence" value="ECO:0007669"/>
    <property type="project" value="TreeGrafter"/>
</dbReference>
<dbReference type="CDD" id="cd07792">
    <property type="entry name" value="ASKHA_NBD_FGGY_GK1-3-like"/>
    <property type="match status" value="1"/>
</dbReference>
<dbReference type="FunFam" id="3.30.420.40:FF:000043">
    <property type="entry name" value="glycerol kinase isoform X1"/>
    <property type="match status" value="1"/>
</dbReference>
<dbReference type="FunFam" id="3.30.420.40:FF:000033">
    <property type="entry name" value="glycerol kinase isoform X2"/>
    <property type="match status" value="1"/>
</dbReference>
<dbReference type="Gene3D" id="3.30.420.40">
    <property type="match status" value="2"/>
</dbReference>
<dbReference type="InterPro" id="IPR043129">
    <property type="entry name" value="ATPase_NBD"/>
</dbReference>
<dbReference type="InterPro" id="IPR000577">
    <property type="entry name" value="Carb_kinase_FGGY"/>
</dbReference>
<dbReference type="InterPro" id="IPR018483">
    <property type="entry name" value="Carb_kinase_FGGY_CS"/>
</dbReference>
<dbReference type="InterPro" id="IPR018485">
    <property type="entry name" value="FGGY_C"/>
</dbReference>
<dbReference type="InterPro" id="IPR018484">
    <property type="entry name" value="FGGY_N"/>
</dbReference>
<dbReference type="InterPro" id="IPR042018">
    <property type="entry name" value="GK1-3_metazoan-type"/>
</dbReference>
<dbReference type="InterPro" id="IPR005999">
    <property type="entry name" value="Glycerol_kin"/>
</dbReference>
<dbReference type="NCBIfam" id="TIGR01311">
    <property type="entry name" value="glycerol_kin"/>
    <property type="match status" value="1"/>
</dbReference>
<dbReference type="NCBIfam" id="NF000756">
    <property type="entry name" value="PRK00047.1"/>
    <property type="match status" value="1"/>
</dbReference>
<dbReference type="PANTHER" id="PTHR10196:SF46">
    <property type="entry name" value="GLYCEROL KINASE 2"/>
    <property type="match status" value="1"/>
</dbReference>
<dbReference type="PANTHER" id="PTHR10196">
    <property type="entry name" value="SUGAR KINASE"/>
    <property type="match status" value="1"/>
</dbReference>
<dbReference type="Pfam" id="PF02782">
    <property type="entry name" value="FGGY_C"/>
    <property type="match status" value="1"/>
</dbReference>
<dbReference type="Pfam" id="PF00370">
    <property type="entry name" value="FGGY_N"/>
    <property type="match status" value="1"/>
</dbReference>
<dbReference type="PIRSF" id="PIRSF000538">
    <property type="entry name" value="GlpK"/>
    <property type="match status" value="1"/>
</dbReference>
<dbReference type="SUPFAM" id="SSF53067">
    <property type="entry name" value="Actin-like ATPase domain"/>
    <property type="match status" value="2"/>
</dbReference>
<dbReference type="PROSITE" id="PS00933">
    <property type="entry name" value="FGGY_KINASES_1"/>
    <property type="match status" value="1"/>
</dbReference>
<dbReference type="PROSITE" id="PS00445">
    <property type="entry name" value="FGGY_KINASES_2"/>
    <property type="match status" value="1"/>
</dbReference>
<organism>
    <name type="scientific">Macaca fascicularis</name>
    <name type="common">Crab-eating macaque</name>
    <name type="synonym">Cynomolgus monkey</name>
    <dbReference type="NCBI Taxonomy" id="9541"/>
    <lineage>
        <taxon>Eukaryota</taxon>
        <taxon>Metazoa</taxon>
        <taxon>Chordata</taxon>
        <taxon>Craniata</taxon>
        <taxon>Vertebrata</taxon>
        <taxon>Euteleostomi</taxon>
        <taxon>Mammalia</taxon>
        <taxon>Eutheria</taxon>
        <taxon>Euarchontoglires</taxon>
        <taxon>Primates</taxon>
        <taxon>Haplorrhini</taxon>
        <taxon>Catarrhini</taxon>
        <taxon>Cercopithecidae</taxon>
        <taxon>Cercopithecinae</taxon>
        <taxon>Macaca</taxon>
    </lineage>
</organism>
<sequence length="553" mass="60705">MADPKTAAVGPLVGAVVQGTDSTRFLVFSSKTAELLSHHKVELTQEFPKEGWVEQDPKEILQSVYECIARTCEKLDEMNIDISNIKAVGISNQRETTVIWDKLTGEPLYNAVVWLDLRTQTTVEDLSKKIPGNSNFVKSKTGLPLSTYFSAVKLRWMLDNVRHVQKAVEEGRALFGTIDSWLIWSLTGGVNGGVHCTDVTNASRTMLFNIHSLEWDKELCDFFEIPMDLLPNVFSSSEIYGLIKTGALEGVPISGCLGDQCAALVGQMCFQEGQAKNTYGTGCFLLCNTGRKCVFSEHGLLTTIAYKLGKEKPAYYALEGSVAIAGAVIRWLRDNLGIIETSGDIEKLAKEVGTSYGCYFVPAFSGLYAPYWEPSARGILCGLTQFTNKCHIAFAALEAVCFQTREILEAMNRDCGIPLRHLQVDGGMTNNKVLMQLQADILHIPVIKPFMPETTALGAAMAAGAAEGVSVWSLEPQALSVLRMERFEPQIQATESEIRYATWKKAVMKSMGWVTSQSPESGDPSIFSSMPLGFFIVSSMVMLIGARYISGMP</sequence>
<name>GLPK2_MACFA</name>